<name>COAA_SERP5</name>
<comment type="catalytic activity">
    <reaction evidence="1">
        <text>(R)-pantothenate + ATP = (R)-4'-phosphopantothenate + ADP + H(+)</text>
        <dbReference type="Rhea" id="RHEA:16373"/>
        <dbReference type="ChEBI" id="CHEBI:10986"/>
        <dbReference type="ChEBI" id="CHEBI:15378"/>
        <dbReference type="ChEBI" id="CHEBI:29032"/>
        <dbReference type="ChEBI" id="CHEBI:30616"/>
        <dbReference type="ChEBI" id="CHEBI:456216"/>
        <dbReference type="EC" id="2.7.1.33"/>
    </reaction>
</comment>
<comment type="pathway">
    <text evidence="1">Cofactor biosynthesis; coenzyme A biosynthesis; CoA from (R)-pantothenate: step 1/5.</text>
</comment>
<comment type="subcellular location">
    <subcellularLocation>
        <location evidence="1">Cytoplasm</location>
    </subcellularLocation>
</comment>
<comment type="similarity">
    <text evidence="1">Belongs to the prokaryotic pantothenate kinase family.</text>
</comment>
<gene>
    <name evidence="1" type="primary">coaA</name>
    <name type="ordered locus">Spro_0269</name>
</gene>
<evidence type="ECO:0000255" key="1">
    <source>
        <dbReference type="HAMAP-Rule" id="MF_00215"/>
    </source>
</evidence>
<reference key="1">
    <citation type="submission" date="2007-09" db="EMBL/GenBank/DDBJ databases">
        <title>Complete sequence of chromosome of Serratia proteamaculans 568.</title>
        <authorList>
            <consortium name="US DOE Joint Genome Institute"/>
            <person name="Copeland A."/>
            <person name="Lucas S."/>
            <person name="Lapidus A."/>
            <person name="Barry K."/>
            <person name="Glavina del Rio T."/>
            <person name="Dalin E."/>
            <person name="Tice H."/>
            <person name="Pitluck S."/>
            <person name="Chain P."/>
            <person name="Malfatti S."/>
            <person name="Shin M."/>
            <person name="Vergez L."/>
            <person name="Schmutz J."/>
            <person name="Larimer F."/>
            <person name="Land M."/>
            <person name="Hauser L."/>
            <person name="Kyrpides N."/>
            <person name="Kim E."/>
            <person name="Taghavi S."/>
            <person name="Newman L."/>
            <person name="Vangronsveld J."/>
            <person name="van der Lelie D."/>
            <person name="Richardson P."/>
        </authorList>
    </citation>
    <scope>NUCLEOTIDE SEQUENCE [LARGE SCALE GENOMIC DNA]</scope>
    <source>
        <strain>568</strain>
    </source>
</reference>
<accession>A8G8D9</accession>
<sequence>MIKRDQSLATPYLQFDRTQWAALRDSVPLTLSEEEIVKLKGINEDLSLEEVAQIYLPLSRLLNFYISSNLRRQAVLEQFLGTDGQKIPYVIGIAGSVAVGKSTTARLLQALLSSWPEHRSVELITTDGFLHPNKVLNERGLMKKKGFPQSYDMHSLVKFVSEVKSGAKRVTAPVYSHLIYDVVPEGNKVIEQPDILILEGLNVLQSGMDYPHDPHRVFVSDFVDFSIYVDAPEELLQSWYINRFLKFRQGAFSNPDSYFHNYSKLPEPEAINIASQLWNEINGLNLQENILPTRERASLIMTKSANHAVENVRLRK</sequence>
<dbReference type="EC" id="2.7.1.33" evidence="1"/>
<dbReference type="EMBL" id="CP000826">
    <property type="protein sequence ID" value="ABV39379.1"/>
    <property type="molecule type" value="Genomic_DNA"/>
</dbReference>
<dbReference type="SMR" id="A8G8D9"/>
<dbReference type="STRING" id="399741.Spro_0269"/>
<dbReference type="KEGG" id="spe:Spro_0269"/>
<dbReference type="eggNOG" id="COG1072">
    <property type="taxonomic scope" value="Bacteria"/>
</dbReference>
<dbReference type="HOGENOM" id="CLU_053818_1_1_6"/>
<dbReference type="OrthoDB" id="1550976at2"/>
<dbReference type="UniPathway" id="UPA00241">
    <property type="reaction ID" value="UER00352"/>
</dbReference>
<dbReference type="GO" id="GO:0005737">
    <property type="term" value="C:cytoplasm"/>
    <property type="evidence" value="ECO:0007669"/>
    <property type="project" value="UniProtKB-SubCell"/>
</dbReference>
<dbReference type="GO" id="GO:0005524">
    <property type="term" value="F:ATP binding"/>
    <property type="evidence" value="ECO:0007669"/>
    <property type="project" value="UniProtKB-UniRule"/>
</dbReference>
<dbReference type="GO" id="GO:0004594">
    <property type="term" value="F:pantothenate kinase activity"/>
    <property type="evidence" value="ECO:0007669"/>
    <property type="project" value="UniProtKB-UniRule"/>
</dbReference>
<dbReference type="GO" id="GO:0015937">
    <property type="term" value="P:coenzyme A biosynthetic process"/>
    <property type="evidence" value="ECO:0007669"/>
    <property type="project" value="UniProtKB-UniRule"/>
</dbReference>
<dbReference type="CDD" id="cd02025">
    <property type="entry name" value="PanK"/>
    <property type="match status" value="1"/>
</dbReference>
<dbReference type="FunFam" id="3.40.50.300:FF:000242">
    <property type="entry name" value="Pantothenate kinase"/>
    <property type="match status" value="1"/>
</dbReference>
<dbReference type="Gene3D" id="3.40.50.300">
    <property type="entry name" value="P-loop containing nucleotide triphosphate hydrolases"/>
    <property type="match status" value="1"/>
</dbReference>
<dbReference type="HAMAP" id="MF_00215">
    <property type="entry name" value="Pantothen_kinase_1"/>
    <property type="match status" value="1"/>
</dbReference>
<dbReference type="InterPro" id="IPR027417">
    <property type="entry name" value="P-loop_NTPase"/>
</dbReference>
<dbReference type="InterPro" id="IPR004566">
    <property type="entry name" value="PanK"/>
</dbReference>
<dbReference type="InterPro" id="IPR006083">
    <property type="entry name" value="PRK/URK"/>
</dbReference>
<dbReference type="NCBIfam" id="TIGR00554">
    <property type="entry name" value="panK_bact"/>
    <property type="match status" value="1"/>
</dbReference>
<dbReference type="PANTHER" id="PTHR10285">
    <property type="entry name" value="URIDINE KINASE"/>
    <property type="match status" value="1"/>
</dbReference>
<dbReference type="Pfam" id="PF00485">
    <property type="entry name" value="PRK"/>
    <property type="match status" value="1"/>
</dbReference>
<dbReference type="PIRSF" id="PIRSF000545">
    <property type="entry name" value="Pantothenate_kin"/>
    <property type="match status" value="1"/>
</dbReference>
<dbReference type="SUPFAM" id="SSF52540">
    <property type="entry name" value="P-loop containing nucleoside triphosphate hydrolases"/>
    <property type="match status" value="1"/>
</dbReference>
<feature type="chain" id="PRO_1000058635" description="Pantothenate kinase">
    <location>
        <begin position="1"/>
        <end position="316"/>
    </location>
</feature>
<feature type="binding site" evidence="1">
    <location>
        <begin position="95"/>
        <end position="102"/>
    </location>
    <ligand>
        <name>ATP</name>
        <dbReference type="ChEBI" id="CHEBI:30616"/>
    </ligand>
</feature>
<organism>
    <name type="scientific">Serratia proteamaculans (strain 568)</name>
    <dbReference type="NCBI Taxonomy" id="399741"/>
    <lineage>
        <taxon>Bacteria</taxon>
        <taxon>Pseudomonadati</taxon>
        <taxon>Pseudomonadota</taxon>
        <taxon>Gammaproteobacteria</taxon>
        <taxon>Enterobacterales</taxon>
        <taxon>Yersiniaceae</taxon>
        <taxon>Serratia</taxon>
    </lineage>
</organism>
<keyword id="KW-0067">ATP-binding</keyword>
<keyword id="KW-0173">Coenzyme A biosynthesis</keyword>
<keyword id="KW-0963">Cytoplasm</keyword>
<keyword id="KW-0418">Kinase</keyword>
<keyword id="KW-0547">Nucleotide-binding</keyword>
<keyword id="KW-0808">Transferase</keyword>
<protein>
    <recommendedName>
        <fullName evidence="1">Pantothenate kinase</fullName>
        <ecNumber evidence="1">2.7.1.33</ecNumber>
    </recommendedName>
    <alternativeName>
        <fullName evidence="1">Pantothenic acid kinase</fullName>
    </alternativeName>
</protein>
<proteinExistence type="inferred from homology"/>